<reference key="1">
    <citation type="journal article" date="2005" name="Nucleic Acids Res.">
        <title>Genome dynamics and diversity of Shigella species, the etiologic agents of bacillary dysentery.</title>
        <authorList>
            <person name="Yang F."/>
            <person name="Yang J."/>
            <person name="Zhang X."/>
            <person name="Chen L."/>
            <person name="Jiang Y."/>
            <person name="Yan Y."/>
            <person name="Tang X."/>
            <person name="Wang J."/>
            <person name="Xiong Z."/>
            <person name="Dong J."/>
            <person name="Xue Y."/>
            <person name="Zhu Y."/>
            <person name="Xu X."/>
            <person name="Sun L."/>
            <person name="Chen S."/>
            <person name="Nie H."/>
            <person name="Peng J."/>
            <person name="Xu J."/>
            <person name="Wang Y."/>
            <person name="Yuan Z."/>
            <person name="Wen Y."/>
            <person name="Yao Z."/>
            <person name="Shen Y."/>
            <person name="Qiang B."/>
            <person name="Hou Y."/>
            <person name="Yu J."/>
            <person name="Jin Q."/>
        </authorList>
    </citation>
    <scope>NUCLEOTIDE SEQUENCE [LARGE SCALE GENOMIC DNA]</scope>
    <source>
        <strain>Ss046</strain>
    </source>
</reference>
<comment type="function">
    <text evidence="1">Catalyzes the reversible conversion of ribose-5-phosphate to ribulose 5-phosphate.</text>
</comment>
<comment type="catalytic activity">
    <reaction evidence="1">
        <text>aldehydo-D-ribose 5-phosphate = D-ribulose 5-phosphate</text>
        <dbReference type="Rhea" id="RHEA:14657"/>
        <dbReference type="ChEBI" id="CHEBI:58121"/>
        <dbReference type="ChEBI" id="CHEBI:58273"/>
        <dbReference type="EC" id="5.3.1.6"/>
    </reaction>
</comment>
<comment type="pathway">
    <text evidence="1">Carbohydrate degradation; pentose phosphate pathway; D-ribose 5-phosphate from D-ribulose 5-phosphate (non-oxidative stage): step 1/1.</text>
</comment>
<comment type="subunit">
    <text evidence="1">Homodimer.</text>
</comment>
<comment type="similarity">
    <text evidence="1">Belongs to the ribose 5-phosphate isomerase family.</text>
</comment>
<name>RPIA_SHISS</name>
<protein>
    <recommendedName>
        <fullName evidence="1">Ribose-5-phosphate isomerase A</fullName>
        <ecNumber evidence="1">5.3.1.6</ecNumber>
    </recommendedName>
    <alternativeName>
        <fullName evidence="1">Phosphoriboisomerase A</fullName>
        <shortName evidence="1">PRI</shortName>
    </alternativeName>
</protein>
<gene>
    <name evidence="1" type="primary">rpiA</name>
    <name type="ordered locus">SSON_3066</name>
</gene>
<feature type="chain" id="PRO_1000017000" description="Ribose-5-phosphate isomerase A">
    <location>
        <begin position="1"/>
        <end position="219"/>
    </location>
</feature>
<feature type="active site" description="Proton acceptor" evidence="1">
    <location>
        <position position="103"/>
    </location>
</feature>
<feature type="binding site" evidence="1">
    <location>
        <begin position="28"/>
        <end position="31"/>
    </location>
    <ligand>
        <name>substrate</name>
    </ligand>
</feature>
<feature type="binding site" evidence="1">
    <location>
        <begin position="81"/>
        <end position="84"/>
    </location>
    <ligand>
        <name>substrate</name>
    </ligand>
</feature>
<feature type="binding site" evidence="1">
    <location>
        <begin position="94"/>
        <end position="97"/>
    </location>
    <ligand>
        <name>substrate</name>
    </ligand>
</feature>
<feature type="binding site" evidence="1">
    <location>
        <position position="121"/>
    </location>
    <ligand>
        <name>substrate</name>
    </ligand>
</feature>
<proteinExistence type="inferred from homology"/>
<dbReference type="EC" id="5.3.1.6" evidence="1"/>
<dbReference type="EMBL" id="CP000038">
    <property type="protein sequence ID" value="AAZ89655.1"/>
    <property type="molecule type" value="Genomic_DNA"/>
</dbReference>
<dbReference type="RefSeq" id="WP_000189743.1">
    <property type="nucleotide sequence ID" value="NC_007384.1"/>
</dbReference>
<dbReference type="SMR" id="Q3YXV7"/>
<dbReference type="GeneID" id="93779085"/>
<dbReference type="KEGG" id="ssn:SSON_3066"/>
<dbReference type="HOGENOM" id="CLU_056590_1_1_6"/>
<dbReference type="UniPathway" id="UPA00115">
    <property type="reaction ID" value="UER00412"/>
</dbReference>
<dbReference type="Proteomes" id="UP000002529">
    <property type="component" value="Chromosome"/>
</dbReference>
<dbReference type="GO" id="GO:0005829">
    <property type="term" value="C:cytosol"/>
    <property type="evidence" value="ECO:0007669"/>
    <property type="project" value="TreeGrafter"/>
</dbReference>
<dbReference type="GO" id="GO:0004751">
    <property type="term" value="F:ribose-5-phosphate isomerase activity"/>
    <property type="evidence" value="ECO:0007669"/>
    <property type="project" value="UniProtKB-UniRule"/>
</dbReference>
<dbReference type="GO" id="GO:0006014">
    <property type="term" value="P:D-ribose metabolic process"/>
    <property type="evidence" value="ECO:0007669"/>
    <property type="project" value="TreeGrafter"/>
</dbReference>
<dbReference type="GO" id="GO:0009052">
    <property type="term" value="P:pentose-phosphate shunt, non-oxidative branch"/>
    <property type="evidence" value="ECO:0007669"/>
    <property type="project" value="UniProtKB-UniRule"/>
</dbReference>
<dbReference type="CDD" id="cd01398">
    <property type="entry name" value="RPI_A"/>
    <property type="match status" value="1"/>
</dbReference>
<dbReference type="FunFam" id="3.30.70.260:FF:000004">
    <property type="entry name" value="Ribose-5-phosphate isomerase A"/>
    <property type="match status" value="1"/>
</dbReference>
<dbReference type="FunFam" id="3.40.50.1360:FF:000001">
    <property type="entry name" value="Ribose-5-phosphate isomerase A"/>
    <property type="match status" value="1"/>
</dbReference>
<dbReference type="Gene3D" id="3.30.70.260">
    <property type="match status" value="1"/>
</dbReference>
<dbReference type="Gene3D" id="3.40.50.1360">
    <property type="match status" value="1"/>
</dbReference>
<dbReference type="HAMAP" id="MF_00170">
    <property type="entry name" value="Rib_5P_isom_A"/>
    <property type="match status" value="1"/>
</dbReference>
<dbReference type="InterPro" id="IPR037171">
    <property type="entry name" value="NagB/RpiA_transferase-like"/>
</dbReference>
<dbReference type="InterPro" id="IPR020672">
    <property type="entry name" value="Ribose5P_isomerase_typA_subgr"/>
</dbReference>
<dbReference type="InterPro" id="IPR004788">
    <property type="entry name" value="Ribose5P_isomerase_type_A"/>
</dbReference>
<dbReference type="NCBIfam" id="NF001924">
    <property type="entry name" value="PRK00702.1"/>
    <property type="match status" value="1"/>
</dbReference>
<dbReference type="NCBIfam" id="TIGR00021">
    <property type="entry name" value="rpiA"/>
    <property type="match status" value="1"/>
</dbReference>
<dbReference type="PANTHER" id="PTHR11934">
    <property type="entry name" value="RIBOSE-5-PHOSPHATE ISOMERASE"/>
    <property type="match status" value="1"/>
</dbReference>
<dbReference type="PANTHER" id="PTHR11934:SF0">
    <property type="entry name" value="RIBOSE-5-PHOSPHATE ISOMERASE"/>
    <property type="match status" value="1"/>
</dbReference>
<dbReference type="Pfam" id="PF06026">
    <property type="entry name" value="Rib_5-P_isom_A"/>
    <property type="match status" value="1"/>
</dbReference>
<dbReference type="SUPFAM" id="SSF75445">
    <property type="entry name" value="D-ribose-5-phosphate isomerase (RpiA), lid domain"/>
    <property type="match status" value="1"/>
</dbReference>
<dbReference type="SUPFAM" id="SSF100950">
    <property type="entry name" value="NagB/RpiA/CoA transferase-like"/>
    <property type="match status" value="1"/>
</dbReference>
<organism>
    <name type="scientific">Shigella sonnei (strain Ss046)</name>
    <dbReference type="NCBI Taxonomy" id="300269"/>
    <lineage>
        <taxon>Bacteria</taxon>
        <taxon>Pseudomonadati</taxon>
        <taxon>Pseudomonadota</taxon>
        <taxon>Gammaproteobacteria</taxon>
        <taxon>Enterobacterales</taxon>
        <taxon>Enterobacteriaceae</taxon>
        <taxon>Shigella</taxon>
    </lineage>
</organism>
<sequence length="219" mass="22860">MTQDELKKAVGWAALQYVQPGTIVGVGTGSTAAHFIDALGTMKGQIEGAVSSSDASTEKLKSLGIHVFDLNEVDSLGIYVDGADEINGHMQMIKGGGAALTREKIIASVAEKFICIADASKQVDILGKFPLPVEVIPMARSAVARQLVKLGGRPEYRQGVVTDNGNVILDVHGMEILDPIAMENAINAIPGVVTVGLFANRGADVALIGTPDGVKTIVK</sequence>
<evidence type="ECO:0000255" key="1">
    <source>
        <dbReference type="HAMAP-Rule" id="MF_00170"/>
    </source>
</evidence>
<keyword id="KW-0413">Isomerase</keyword>
<keyword id="KW-1185">Reference proteome</keyword>
<accession>Q3YXV7</accession>